<protein>
    <recommendedName>
        <fullName evidence="1">Protease HtpX homolog</fullName>
        <ecNumber evidence="1">3.4.24.-</ecNumber>
    </recommendedName>
</protein>
<proteinExistence type="inferred from homology"/>
<gene>
    <name evidence="1" type="primary">htpX</name>
    <name type="ordered locus">CC_2509</name>
</gene>
<name>HTPX_CAUVC</name>
<reference key="1">
    <citation type="journal article" date="2001" name="Proc. Natl. Acad. Sci. U.S.A.">
        <title>Complete genome sequence of Caulobacter crescentus.</title>
        <authorList>
            <person name="Nierman W.C."/>
            <person name="Feldblyum T.V."/>
            <person name="Laub M.T."/>
            <person name="Paulsen I.T."/>
            <person name="Nelson K.E."/>
            <person name="Eisen J.A."/>
            <person name="Heidelberg J.F."/>
            <person name="Alley M.R.K."/>
            <person name="Ohta N."/>
            <person name="Maddock J.R."/>
            <person name="Potocka I."/>
            <person name="Nelson W.C."/>
            <person name="Newton A."/>
            <person name="Stephens C."/>
            <person name="Phadke N.D."/>
            <person name="Ely B."/>
            <person name="DeBoy R.T."/>
            <person name="Dodson R.J."/>
            <person name="Durkin A.S."/>
            <person name="Gwinn M.L."/>
            <person name="Haft D.H."/>
            <person name="Kolonay J.F."/>
            <person name="Smit J."/>
            <person name="Craven M.B."/>
            <person name="Khouri H.M."/>
            <person name="Shetty J."/>
            <person name="Berry K.J."/>
            <person name="Utterback T.R."/>
            <person name="Tran K."/>
            <person name="Wolf A.M."/>
            <person name="Vamathevan J.J."/>
            <person name="Ermolaeva M.D."/>
            <person name="White O."/>
            <person name="Salzberg S.L."/>
            <person name="Venter J.C."/>
            <person name="Shapiro L."/>
            <person name="Fraser C.M."/>
        </authorList>
    </citation>
    <scope>NUCLEOTIDE SEQUENCE [LARGE SCALE GENOMIC DNA]</scope>
    <source>
        <strain>ATCC 19089 / CIP 103742 / CB 15</strain>
    </source>
</reference>
<comment type="cofactor">
    <cofactor evidence="1">
        <name>Zn(2+)</name>
        <dbReference type="ChEBI" id="CHEBI:29105"/>
    </cofactor>
    <text evidence="1">Binds 1 zinc ion per subunit.</text>
</comment>
<comment type="subcellular location">
    <subcellularLocation>
        <location evidence="1">Cell inner membrane</location>
        <topology evidence="1">Multi-pass membrane protein</topology>
    </subcellularLocation>
</comment>
<comment type="similarity">
    <text evidence="1">Belongs to the peptidase M48B family.</text>
</comment>
<dbReference type="EC" id="3.4.24.-" evidence="1"/>
<dbReference type="EMBL" id="AE005673">
    <property type="protein sequence ID" value="AAK24480.1"/>
    <property type="molecule type" value="Genomic_DNA"/>
</dbReference>
<dbReference type="PIR" id="D87560">
    <property type="entry name" value="D87560"/>
</dbReference>
<dbReference type="RefSeq" id="NP_421312.1">
    <property type="nucleotide sequence ID" value="NC_002696.2"/>
</dbReference>
<dbReference type="RefSeq" id="WP_010920366.1">
    <property type="nucleotide sequence ID" value="NC_002696.2"/>
</dbReference>
<dbReference type="SMR" id="Q9A5E1"/>
<dbReference type="STRING" id="190650.CC_2509"/>
<dbReference type="EnsemblBacteria" id="AAK24480">
    <property type="protein sequence ID" value="AAK24480"/>
    <property type="gene ID" value="CC_2509"/>
</dbReference>
<dbReference type="KEGG" id="ccr:CC_2509"/>
<dbReference type="PATRIC" id="fig|190650.5.peg.2526"/>
<dbReference type="eggNOG" id="COG0501">
    <property type="taxonomic scope" value="Bacteria"/>
</dbReference>
<dbReference type="HOGENOM" id="CLU_042266_3_0_5"/>
<dbReference type="BioCyc" id="CAULO:CC2509-MONOMER"/>
<dbReference type="Proteomes" id="UP000001816">
    <property type="component" value="Chromosome"/>
</dbReference>
<dbReference type="GO" id="GO:0005886">
    <property type="term" value="C:plasma membrane"/>
    <property type="evidence" value="ECO:0007669"/>
    <property type="project" value="UniProtKB-SubCell"/>
</dbReference>
<dbReference type="GO" id="GO:0004222">
    <property type="term" value="F:metalloendopeptidase activity"/>
    <property type="evidence" value="ECO:0007669"/>
    <property type="project" value="UniProtKB-UniRule"/>
</dbReference>
<dbReference type="GO" id="GO:0008270">
    <property type="term" value="F:zinc ion binding"/>
    <property type="evidence" value="ECO:0007669"/>
    <property type="project" value="UniProtKB-UniRule"/>
</dbReference>
<dbReference type="GO" id="GO:0006508">
    <property type="term" value="P:proteolysis"/>
    <property type="evidence" value="ECO:0007669"/>
    <property type="project" value="UniProtKB-KW"/>
</dbReference>
<dbReference type="CDD" id="cd07336">
    <property type="entry name" value="M48B_HtpX_like"/>
    <property type="match status" value="1"/>
</dbReference>
<dbReference type="Gene3D" id="3.30.2010.10">
    <property type="entry name" value="Metalloproteases ('zincins'), catalytic domain"/>
    <property type="match status" value="1"/>
</dbReference>
<dbReference type="HAMAP" id="MF_00188">
    <property type="entry name" value="Pept_M48_protease_HtpX"/>
    <property type="match status" value="1"/>
</dbReference>
<dbReference type="InterPro" id="IPR050083">
    <property type="entry name" value="HtpX_protease"/>
</dbReference>
<dbReference type="InterPro" id="IPR022919">
    <property type="entry name" value="Pept_M48_protease_HtpX"/>
</dbReference>
<dbReference type="InterPro" id="IPR001915">
    <property type="entry name" value="Peptidase_M48"/>
</dbReference>
<dbReference type="NCBIfam" id="NF002363">
    <property type="entry name" value="PRK01345.1"/>
    <property type="match status" value="1"/>
</dbReference>
<dbReference type="NCBIfam" id="NF002826">
    <property type="entry name" value="PRK03001.1"/>
    <property type="match status" value="1"/>
</dbReference>
<dbReference type="PANTHER" id="PTHR43221">
    <property type="entry name" value="PROTEASE HTPX"/>
    <property type="match status" value="1"/>
</dbReference>
<dbReference type="PANTHER" id="PTHR43221:SF1">
    <property type="entry name" value="PROTEASE HTPX"/>
    <property type="match status" value="1"/>
</dbReference>
<dbReference type="Pfam" id="PF01435">
    <property type="entry name" value="Peptidase_M48"/>
    <property type="match status" value="1"/>
</dbReference>
<evidence type="ECO:0000255" key="1">
    <source>
        <dbReference type="HAMAP-Rule" id="MF_00188"/>
    </source>
</evidence>
<evidence type="ECO:0000256" key="2">
    <source>
        <dbReference type="SAM" id="MobiDB-lite"/>
    </source>
</evidence>
<feature type="chain" id="PRO_0000138859" description="Protease HtpX homolog">
    <location>
        <begin position="1"/>
        <end position="316"/>
    </location>
</feature>
<feature type="transmembrane region" description="Helical" evidence="1">
    <location>
        <begin position="16"/>
        <end position="36"/>
    </location>
</feature>
<feature type="transmembrane region" description="Helical" evidence="1">
    <location>
        <begin position="149"/>
        <end position="169"/>
    </location>
</feature>
<feature type="transmembrane region" description="Helical" evidence="1">
    <location>
        <begin position="180"/>
        <end position="200"/>
    </location>
</feature>
<feature type="region of interest" description="Disordered" evidence="2">
    <location>
        <begin position="295"/>
        <end position="316"/>
    </location>
</feature>
<feature type="active site" evidence="1">
    <location>
        <position position="135"/>
    </location>
</feature>
<feature type="binding site" evidence="1">
    <location>
        <position position="134"/>
    </location>
    <ligand>
        <name>Zn(2+)</name>
        <dbReference type="ChEBI" id="CHEBI:29105"/>
        <note>catalytic</note>
    </ligand>
</feature>
<feature type="binding site" evidence="1">
    <location>
        <position position="138"/>
    </location>
    <ligand>
        <name>Zn(2+)</name>
        <dbReference type="ChEBI" id="CHEBI:29105"/>
        <note>catalytic</note>
    </ligand>
</feature>
<feature type="binding site" evidence="1">
    <location>
        <position position="209"/>
    </location>
    <ligand>
        <name>Zn(2+)</name>
        <dbReference type="ChEBI" id="CHEBI:29105"/>
        <note>catalytic</note>
    </ligand>
</feature>
<accession>Q9A5E1</accession>
<sequence>MNHFKTYMLLAGLTALFMGAGFLIGGATGMMIALVFALAMNAFSYWNADKIVLRTYGAVEVDESHPEPLIRNYVIDTVEMARSAGLPRPRITVIDSAQPNAFATGRDPDHAAVAASTGLLQLLTREEIRGVMAHELAHVKNRDTLVMTVTATIAGAISALANFAFFFGGSRDEEGNGGGLGGMIGAILIAILAPIAAMLVQMAISRAREYEADRIGAQIAGDSESLARALQKIEAYARGGYENVQAERNPATAHMFIINPLAGKGADNLFSTHPATHNRVEALMRLGVERGARRPVMAATTSSSVPLSGERGGPWS</sequence>
<organism>
    <name type="scientific">Caulobacter vibrioides (strain ATCC 19089 / CIP 103742 / CB 15)</name>
    <name type="common">Caulobacter crescentus</name>
    <dbReference type="NCBI Taxonomy" id="190650"/>
    <lineage>
        <taxon>Bacteria</taxon>
        <taxon>Pseudomonadati</taxon>
        <taxon>Pseudomonadota</taxon>
        <taxon>Alphaproteobacteria</taxon>
        <taxon>Caulobacterales</taxon>
        <taxon>Caulobacteraceae</taxon>
        <taxon>Caulobacter</taxon>
    </lineage>
</organism>
<keyword id="KW-0997">Cell inner membrane</keyword>
<keyword id="KW-1003">Cell membrane</keyword>
<keyword id="KW-0378">Hydrolase</keyword>
<keyword id="KW-0472">Membrane</keyword>
<keyword id="KW-0479">Metal-binding</keyword>
<keyword id="KW-0482">Metalloprotease</keyword>
<keyword id="KW-0645">Protease</keyword>
<keyword id="KW-1185">Reference proteome</keyword>
<keyword id="KW-0812">Transmembrane</keyword>
<keyword id="KW-1133">Transmembrane helix</keyword>
<keyword id="KW-0862">Zinc</keyword>